<comment type="function">
    <text evidence="1">Binds 23S rRNA and is also seen to make contacts with the A and possibly P site tRNAs.</text>
</comment>
<comment type="subunit">
    <text evidence="1">Part of the 50S ribosomal subunit.</text>
</comment>
<comment type="similarity">
    <text evidence="1">Belongs to the universal ribosomal protein uL16 family.</text>
</comment>
<evidence type="ECO:0000255" key="1">
    <source>
        <dbReference type="HAMAP-Rule" id="MF_01342"/>
    </source>
</evidence>
<evidence type="ECO:0000305" key="2"/>
<proteinExistence type="inferred from homology"/>
<keyword id="KW-0687">Ribonucleoprotein</keyword>
<keyword id="KW-0689">Ribosomal protein</keyword>
<keyword id="KW-0694">RNA-binding</keyword>
<keyword id="KW-0699">rRNA-binding</keyword>
<keyword id="KW-0820">tRNA-binding</keyword>
<organism>
    <name type="scientific">Mesomycoplasma hyopneumoniae (strain J / ATCC 25934 / NCTC 10110)</name>
    <name type="common">Mycoplasma hyopneumoniae</name>
    <dbReference type="NCBI Taxonomy" id="262719"/>
    <lineage>
        <taxon>Bacteria</taxon>
        <taxon>Bacillati</taxon>
        <taxon>Mycoplasmatota</taxon>
        <taxon>Mycoplasmoidales</taxon>
        <taxon>Metamycoplasmataceae</taxon>
        <taxon>Mesomycoplasma</taxon>
    </lineage>
</organism>
<sequence length="136" mass="15185">MLQPKKTKHRKTFRLYHDKRDAHSGNFVAFGDYGLQATGSAWVSAAQIEAARIAITRRMGREGQVIIRVFPHLALTSKPIGVRMGSGKGSVDRWVAVVKRNTILFEVRGVKDEIARDALRLGGHKLPLKWKIVATV</sequence>
<protein>
    <recommendedName>
        <fullName evidence="1">Large ribosomal subunit protein uL16</fullName>
    </recommendedName>
    <alternativeName>
        <fullName evidence="2">50S ribosomal protein L16</fullName>
    </alternativeName>
</protein>
<reference key="1">
    <citation type="journal article" date="2005" name="J. Bacteriol.">
        <title>Swine and poultry pathogens: the complete genome sequences of two strains of Mycoplasma hyopneumoniae and a strain of Mycoplasma synoviae.</title>
        <authorList>
            <person name="Vasconcelos A.T.R."/>
            <person name="Ferreira H.B."/>
            <person name="Bizarro C.V."/>
            <person name="Bonatto S.L."/>
            <person name="Carvalho M.O."/>
            <person name="Pinto P.M."/>
            <person name="Almeida D.F."/>
            <person name="Almeida L.G.P."/>
            <person name="Almeida R."/>
            <person name="Alves-Junior L."/>
            <person name="Assuncao E.N."/>
            <person name="Azevedo V.A.C."/>
            <person name="Bogo M.R."/>
            <person name="Brigido M.M."/>
            <person name="Brocchi M."/>
            <person name="Burity H.A."/>
            <person name="Camargo A.A."/>
            <person name="Camargo S.S."/>
            <person name="Carepo M.S."/>
            <person name="Carraro D.M."/>
            <person name="de Mattos Cascardo J.C."/>
            <person name="Castro L.A."/>
            <person name="Cavalcanti G."/>
            <person name="Chemale G."/>
            <person name="Collevatti R.G."/>
            <person name="Cunha C.W."/>
            <person name="Dallagiovanna B."/>
            <person name="Dambros B.P."/>
            <person name="Dellagostin O.A."/>
            <person name="Falcao C."/>
            <person name="Fantinatti-Garboggini F."/>
            <person name="Felipe M.S.S."/>
            <person name="Fiorentin L."/>
            <person name="Franco G.R."/>
            <person name="Freitas N.S.A."/>
            <person name="Frias D."/>
            <person name="Grangeiro T.B."/>
            <person name="Grisard E.C."/>
            <person name="Guimaraes C.T."/>
            <person name="Hungria M."/>
            <person name="Jardim S.N."/>
            <person name="Krieger M.A."/>
            <person name="Laurino J.P."/>
            <person name="Lima L.F.A."/>
            <person name="Lopes M.I."/>
            <person name="Loreto E.L.S."/>
            <person name="Madeira H.M.F."/>
            <person name="Manfio G.P."/>
            <person name="Maranhao A.Q."/>
            <person name="Martinkovics C.T."/>
            <person name="Medeiros S.R.B."/>
            <person name="Moreira M.A.M."/>
            <person name="Neiva M."/>
            <person name="Ramalho-Neto C.E."/>
            <person name="Nicolas M.F."/>
            <person name="Oliveira S.C."/>
            <person name="Paixao R.F.C."/>
            <person name="Pedrosa F.O."/>
            <person name="Pena S.D.J."/>
            <person name="Pereira M."/>
            <person name="Pereira-Ferrari L."/>
            <person name="Piffer I."/>
            <person name="Pinto L.S."/>
            <person name="Potrich D.P."/>
            <person name="Salim A.C.M."/>
            <person name="Santos F.R."/>
            <person name="Schmitt R."/>
            <person name="Schneider M.P.C."/>
            <person name="Schrank A."/>
            <person name="Schrank I.S."/>
            <person name="Schuck A.F."/>
            <person name="Seuanez H.N."/>
            <person name="Silva D.W."/>
            <person name="Silva R."/>
            <person name="Silva S.C."/>
            <person name="Soares C.M.A."/>
            <person name="Souza K.R.L."/>
            <person name="Souza R.C."/>
            <person name="Staats C.C."/>
            <person name="Steffens M.B.R."/>
            <person name="Teixeira S.M.R."/>
            <person name="Urmenyi T.P."/>
            <person name="Vainstein M.H."/>
            <person name="Zuccherato L.W."/>
            <person name="Simpson A.J.G."/>
            <person name="Zaha A."/>
        </authorList>
    </citation>
    <scope>NUCLEOTIDE SEQUENCE [LARGE SCALE GENOMIC DNA]</scope>
    <source>
        <strain>J / ATCC 25934 / NCTC 10110</strain>
    </source>
</reference>
<accession>Q4AAE7</accession>
<gene>
    <name evidence="1" type="primary">rplP</name>
    <name type="ordered locus">MHJ_0183</name>
</gene>
<dbReference type="EMBL" id="AE017243">
    <property type="protein sequence ID" value="AAZ44274.1"/>
    <property type="molecule type" value="Genomic_DNA"/>
</dbReference>
<dbReference type="RefSeq" id="WP_011206032.1">
    <property type="nucleotide sequence ID" value="NC_007295.1"/>
</dbReference>
<dbReference type="SMR" id="Q4AAE7"/>
<dbReference type="GeneID" id="41334486"/>
<dbReference type="KEGG" id="mhj:MHJ_0183"/>
<dbReference type="eggNOG" id="COG0197">
    <property type="taxonomic scope" value="Bacteria"/>
</dbReference>
<dbReference type="HOGENOM" id="CLU_078858_2_1_14"/>
<dbReference type="OrthoDB" id="9802589at2"/>
<dbReference type="Proteomes" id="UP000000548">
    <property type="component" value="Chromosome"/>
</dbReference>
<dbReference type="GO" id="GO:0022625">
    <property type="term" value="C:cytosolic large ribosomal subunit"/>
    <property type="evidence" value="ECO:0007669"/>
    <property type="project" value="TreeGrafter"/>
</dbReference>
<dbReference type="GO" id="GO:0019843">
    <property type="term" value="F:rRNA binding"/>
    <property type="evidence" value="ECO:0007669"/>
    <property type="project" value="UniProtKB-UniRule"/>
</dbReference>
<dbReference type="GO" id="GO:0003735">
    <property type="term" value="F:structural constituent of ribosome"/>
    <property type="evidence" value="ECO:0007669"/>
    <property type="project" value="InterPro"/>
</dbReference>
<dbReference type="GO" id="GO:0000049">
    <property type="term" value="F:tRNA binding"/>
    <property type="evidence" value="ECO:0007669"/>
    <property type="project" value="UniProtKB-KW"/>
</dbReference>
<dbReference type="GO" id="GO:0006412">
    <property type="term" value="P:translation"/>
    <property type="evidence" value="ECO:0007669"/>
    <property type="project" value="UniProtKB-UniRule"/>
</dbReference>
<dbReference type="CDD" id="cd01433">
    <property type="entry name" value="Ribosomal_L16_L10e"/>
    <property type="match status" value="1"/>
</dbReference>
<dbReference type="FunFam" id="3.90.1170.10:FF:000001">
    <property type="entry name" value="50S ribosomal protein L16"/>
    <property type="match status" value="1"/>
</dbReference>
<dbReference type="Gene3D" id="3.90.1170.10">
    <property type="entry name" value="Ribosomal protein L10e/L16"/>
    <property type="match status" value="1"/>
</dbReference>
<dbReference type="HAMAP" id="MF_01342">
    <property type="entry name" value="Ribosomal_uL16"/>
    <property type="match status" value="1"/>
</dbReference>
<dbReference type="InterPro" id="IPR047873">
    <property type="entry name" value="Ribosomal_uL16"/>
</dbReference>
<dbReference type="InterPro" id="IPR000114">
    <property type="entry name" value="Ribosomal_uL16_bact-type"/>
</dbReference>
<dbReference type="InterPro" id="IPR020798">
    <property type="entry name" value="Ribosomal_uL16_CS"/>
</dbReference>
<dbReference type="InterPro" id="IPR016180">
    <property type="entry name" value="Ribosomal_uL16_dom"/>
</dbReference>
<dbReference type="InterPro" id="IPR036920">
    <property type="entry name" value="Ribosomal_uL16_sf"/>
</dbReference>
<dbReference type="NCBIfam" id="TIGR01164">
    <property type="entry name" value="rplP_bact"/>
    <property type="match status" value="1"/>
</dbReference>
<dbReference type="PANTHER" id="PTHR12220">
    <property type="entry name" value="50S/60S RIBOSOMAL PROTEIN L16"/>
    <property type="match status" value="1"/>
</dbReference>
<dbReference type="PANTHER" id="PTHR12220:SF13">
    <property type="entry name" value="LARGE RIBOSOMAL SUBUNIT PROTEIN UL16M"/>
    <property type="match status" value="1"/>
</dbReference>
<dbReference type="Pfam" id="PF00252">
    <property type="entry name" value="Ribosomal_L16"/>
    <property type="match status" value="1"/>
</dbReference>
<dbReference type="PRINTS" id="PR00060">
    <property type="entry name" value="RIBOSOMALL16"/>
</dbReference>
<dbReference type="SUPFAM" id="SSF54686">
    <property type="entry name" value="Ribosomal protein L16p/L10e"/>
    <property type="match status" value="1"/>
</dbReference>
<dbReference type="PROSITE" id="PS00701">
    <property type="entry name" value="RIBOSOMAL_L16_2"/>
    <property type="match status" value="1"/>
</dbReference>
<feature type="chain" id="PRO_0000062144" description="Large ribosomal subunit protein uL16">
    <location>
        <begin position="1"/>
        <end position="136"/>
    </location>
</feature>
<name>RL16_MESHJ</name>